<keyword id="KW-1185">Reference proteome</keyword>
<sequence>MTEHNHDAELTINNEEELLTLYDENGNEVLYRKMLEFYHPEFKKEYVVLAEEGAQSDDEDMIELVPMINEPDESGDGGKLVPIETDEEWDMIEEVVNTEINE</sequence>
<protein>
    <recommendedName>
        <fullName>UPF0473 protein SERP1179</fullName>
    </recommendedName>
</protein>
<feature type="chain" id="PRO_0000299296" description="UPF0473 protein SERP1179">
    <location>
        <begin position="1"/>
        <end position="102"/>
    </location>
</feature>
<proteinExistence type="inferred from homology"/>
<organism>
    <name type="scientific">Staphylococcus epidermidis (strain ATCC 35984 / DSM 28319 / BCRC 17069 / CCUG 31568 / BM 3577 / RP62A)</name>
    <dbReference type="NCBI Taxonomy" id="176279"/>
    <lineage>
        <taxon>Bacteria</taxon>
        <taxon>Bacillati</taxon>
        <taxon>Bacillota</taxon>
        <taxon>Bacilli</taxon>
        <taxon>Bacillales</taxon>
        <taxon>Staphylococcaceae</taxon>
        <taxon>Staphylococcus</taxon>
    </lineage>
</organism>
<dbReference type="EMBL" id="CP000029">
    <property type="protein sequence ID" value="AAW54544.1"/>
    <property type="molecule type" value="Genomic_DNA"/>
</dbReference>
<dbReference type="RefSeq" id="WP_001830855.1">
    <property type="nucleotide sequence ID" value="NC_002976.3"/>
</dbReference>
<dbReference type="STRING" id="176279.SERP1179"/>
<dbReference type="KEGG" id="ser:SERP1179"/>
<dbReference type="eggNOG" id="COG3906">
    <property type="taxonomic scope" value="Bacteria"/>
</dbReference>
<dbReference type="HOGENOM" id="CLU_146610_2_1_9"/>
<dbReference type="Proteomes" id="UP000000531">
    <property type="component" value="Chromosome"/>
</dbReference>
<dbReference type="HAMAP" id="MF_01448">
    <property type="entry name" value="UPF0473"/>
    <property type="match status" value="1"/>
</dbReference>
<dbReference type="InterPro" id="IPR009711">
    <property type="entry name" value="UPF0473"/>
</dbReference>
<dbReference type="NCBIfam" id="NF010214">
    <property type="entry name" value="PRK13678.1-1"/>
    <property type="match status" value="1"/>
</dbReference>
<dbReference type="PANTHER" id="PTHR40066">
    <property type="entry name" value="UPF0473 PROTEIN CBO2561/CLC_2432"/>
    <property type="match status" value="1"/>
</dbReference>
<dbReference type="PANTHER" id="PTHR40066:SF1">
    <property type="entry name" value="UPF0473 PROTEIN CBO2561_CLC_2432"/>
    <property type="match status" value="1"/>
</dbReference>
<dbReference type="Pfam" id="PF06949">
    <property type="entry name" value="DUF1292"/>
    <property type="match status" value="1"/>
</dbReference>
<evidence type="ECO:0000305" key="1"/>
<name>Y1179_STAEQ</name>
<gene>
    <name type="ordered locus">SERP1179</name>
</gene>
<reference key="1">
    <citation type="journal article" date="2005" name="J. Bacteriol.">
        <title>Insights on evolution of virulence and resistance from the complete genome analysis of an early methicillin-resistant Staphylococcus aureus strain and a biofilm-producing methicillin-resistant Staphylococcus epidermidis strain.</title>
        <authorList>
            <person name="Gill S.R."/>
            <person name="Fouts D.E."/>
            <person name="Archer G.L."/>
            <person name="Mongodin E.F."/>
            <person name="DeBoy R.T."/>
            <person name="Ravel J."/>
            <person name="Paulsen I.T."/>
            <person name="Kolonay J.F."/>
            <person name="Brinkac L.M."/>
            <person name="Beanan M.J."/>
            <person name="Dodson R.J."/>
            <person name="Daugherty S.C."/>
            <person name="Madupu R."/>
            <person name="Angiuoli S.V."/>
            <person name="Durkin A.S."/>
            <person name="Haft D.H."/>
            <person name="Vamathevan J.J."/>
            <person name="Khouri H."/>
            <person name="Utterback T.R."/>
            <person name="Lee C."/>
            <person name="Dimitrov G."/>
            <person name="Jiang L."/>
            <person name="Qin H."/>
            <person name="Weidman J."/>
            <person name="Tran K."/>
            <person name="Kang K.H."/>
            <person name="Hance I.R."/>
            <person name="Nelson K.E."/>
            <person name="Fraser C.M."/>
        </authorList>
    </citation>
    <scope>NUCLEOTIDE SEQUENCE [LARGE SCALE GENOMIC DNA]</scope>
    <source>
        <strain>ATCC 35984 / DSM 28319 / BCRC 17069 / CCUG 31568 / BM 3577 / RP62A</strain>
    </source>
</reference>
<accession>Q5HNT5</accession>
<comment type="similarity">
    <text evidence="1">Belongs to the UPF0473 family.</text>
</comment>